<gene>
    <name evidence="1" type="primary">ilvC</name>
    <name type="ordered locus">TTE0015</name>
</gene>
<dbReference type="EC" id="1.1.1.86" evidence="1"/>
<dbReference type="EMBL" id="AE008691">
    <property type="protein sequence ID" value="AAM23332.1"/>
    <property type="molecule type" value="Genomic_DNA"/>
</dbReference>
<dbReference type="RefSeq" id="WP_009610487.1">
    <property type="nucleotide sequence ID" value="NC_003869.1"/>
</dbReference>
<dbReference type="SMR" id="Q8RDK4"/>
<dbReference type="STRING" id="273068.TTE0015"/>
<dbReference type="KEGG" id="tte:TTE0015"/>
<dbReference type="eggNOG" id="COG0059">
    <property type="taxonomic scope" value="Bacteria"/>
</dbReference>
<dbReference type="HOGENOM" id="CLU_033821_0_1_9"/>
<dbReference type="OrthoDB" id="9804088at2"/>
<dbReference type="UniPathway" id="UPA00047">
    <property type="reaction ID" value="UER00056"/>
</dbReference>
<dbReference type="UniPathway" id="UPA00049">
    <property type="reaction ID" value="UER00060"/>
</dbReference>
<dbReference type="Proteomes" id="UP000000555">
    <property type="component" value="Chromosome"/>
</dbReference>
<dbReference type="GO" id="GO:0005829">
    <property type="term" value="C:cytosol"/>
    <property type="evidence" value="ECO:0007669"/>
    <property type="project" value="TreeGrafter"/>
</dbReference>
<dbReference type="GO" id="GO:0004455">
    <property type="term" value="F:ketol-acid reductoisomerase activity"/>
    <property type="evidence" value="ECO:0007669"/>
    <property type="project" value="UniProtKB-UniRule"/>
</dbReference>
<dbReference type="GO" id="GO:0000287">
    <property type="term" value="F:magnesium ion binding"/>
    <property type="evidence" value="ECO:0007669"/>
    <property type="project" value="UniProtKB-UniRule"/>
</dbReference>
<dbReference type="GO" id="GO:0050661">
    <property type="term" value="F:NADP binding"/>
    <property type="evidence" value="ECO:0007669"/>
    <property type="project" value="InterPro"/>
</dbReference>
<dbReference type="GO" id="GO:0009097">
    <property type="term" value="P:isoleucine biosynthetic process"/>
    <property type="evidence" value="ECO:0007669"/>
    <property type="project" value="UniProtKB-UniRule"/>
</dbReference>
<dbReference type="GO" id="GO:0009099">
    <property type="term" value="P:L-valine biosynthetic process"/>
    <property type="evidence" value="ECO:0007669"/>
    <property type="project" value="UniProtKB-UniRule"/>
</dbReference>
<dbReference type="FunFam" id="3.40.50.720:FF:000023">
    <property type="entry name" value="Ketol-acid reductoisomerase (NADP(+))"/>
    <property type="match status" value="1"/>
</dbReference>
<dbReference type="Gene3D" id="6.10.240.10">
    <property type="match status" value="1"/>
</dbReference>
<dbReference type="Gene3D" id="3.40.50.720">
    <property type="entry name" value="NAD(P)-binding Rossmann-like Domain"/>
    <property type="match status" value="1"/>
</dbReference>
<dbReference type="HAMAP" id="MF_00435">
    <property type="entry name" value="IlvC"/>
    <property type="match status" value="1"/>
</dbReference>
<dbReference type="InterPro" id="IPR008927">
    <property type="entry name" value="6-PGluconate_DH-like_C_sf"/>
</dbReference>
<dbReference type="InterPro" id="IPR013023">
    <property type="entry name" value="KARI"/>
</dbReference>
<dbReference type="InterPro" id="IPR000506">
    <property type="entry name" value="KARI_C"/>
</dbReference>
<dbReference type="InterPro" id="IPR013116">
    <property type="entry name" value="KARI_N"/>
</dbReference>
<dbReference type="InterPro" id="IPR014359">
    <property type="entry name" value="KARI_prok"/>
</dbReference>
<dbReference type="InterPro" id="IPR036291">
    <property type="entry name" value="NAD(P)-bd_dom_sf"/>
</dbReference>
<dbReference type="NCBIfam" id="TIGR00465">
    <property type="entry name" value="ilvC"/>
    <property type="match status" value="1"/>
</dbReference>
<dbReference type="NCBIfam" id="NF004017">
    <property type="entry name" value="PRK05479.1"/>
    <property type="match status" value="1"/>
</dbReference>
<dbReference type="NCBIfam" id="NF009940">
    <property type="entry name" value="PRK13403.1"/>
    <property type="match status" value="1"/>
</dbReference>
<dbReference type="PANTHER" id="PTHR21371">
    <property type="entry name" value="KETOL-ACID REDUCTOISOMERASE, MITOCHONDRIAL"/>
    <property type="match status" value="1"/>
</dbReference>
<dbReference type="PANTHER" id="PTHR21371:SF1">
    <property type="entry name" value="KETOL-ACID REDUCTOISOMERASE, MITOCHONDRIAL"/>
    <property type="match status" value="1"/>
</dbReference>
<dbReference type="Pfam" id="PF01450">
    <property type="entry name" value="KARI_C"/>
    <property type="match status" value="1"/>
</dbReference>
<dbReference type="Pfam" id="PF07991">
    <property type="entry name" value="KARI_N"/>
    <property type="match status" value="1"/>
</dbReference>
<dbReference type="PIRSF" id="PIRSF000116">
    <property type="entry name" value="IlvC_gammaproteo"/>
    <property type="match status" value="1"/>
</dbReference>
<dbReference type="SUPFAM" id="SSF48179">
    <property type="entry name" value="6-phosphogluconate dehydrogenase C-terminal domain-like"/>
    <property type="match status" value="1"/>
</dbReference>
<dbReference type="SUPFAM" id="SSF51735">
    <property type="entry name" value="NAD(P)-binding Rossmann-fold domains"/>
    <property type="match status" value="1"/>
</dbReference>
<dbReference type="PROSITE" id="PS51851">
    <property type="entry name" value="KARI_C"/>
    <property type="match status" value="1"/>
</dbReference>
<dbReference type="PROSITE" id="PS51850">
    <property type="entry name" value="KARI_N"/>
    <property type="match status" value="1"/>
</dbReference>
<protein>
    <recommendedName>
        <fullName evidence="1">Ketol-acid reductoisomerase (NADP(+))</fullName>
        <shortName evidence="1">KARI</shortName>
        <ecNumber evidence="1">1.1.1.86</ecNumber>
    </recommendedName>
    <alternativeName>
        <fullName evidence="1">Acetohydroxy-acid isomeroreductase</fullName>
        <shortName evidence="1">AHIR</shortName>
    </alternativeName>
    <alternativeName>
        <fullName evidence="1">Alpha-keto-beta-hydroxylacyl reductoisomerase</fullName>
    </alternativeName>
    <alternativeName>
        <fullName evidence="1">Ketol-acid reductoisomerase type 1</fullName>
    </alternativeName>
    <alternativeName>
        <fullName evidence="1">Ketol-acid reductoisomerase type I</fullName>
    </alternativeName>
</protein>
<proteinExistence type="inferred from homology"/>
<keyword id="KW-0028">Amino-acid biosynthesis</keyword>
<keyword id="KW-0100">Branched-chain amino acid biosynthesis</keyword>
<keyword id="KW-0460">Magnesium</keyword>
<keyword id="KW-0479">Metal-binding</keyword>
<keyword id="KW-0521">NADP</keyword>
<keyword id="KW-0560">Oxidoreductase</keyword>
<keyword id="KW-1185">Reference proteome</keyword>
<reference key="1">
    <citation type="journal article" date="2002" name="Genome Res.">
        <title>A complete sequence of the T. tengcongensis genome.</title>
        <authorList>
            <person name="Bao Q."/>
            <person name="Tian Y."/>
            <person name="Li W."/>
            <person name="Xu Z."/>
            <person name="Xuan Z."/>
            <person name="Hu S."/>
            <person name="Dong W."/>
            <person name="Yang J."/>
            <person name="Chen Y."/>
            <person name="Xue Y."/>
            <person name="Xu Y."/>
            <person name="Lai X."/>
            <person name="Huang L."/>
            <person name="Dong X."/>
            <person name="Ma Y."/>
            <person name="Ling L."/>
            <person name="Tan H."/>
            <person name="Chen R."/>
            <person name="Wang J."/>
            <person name="Yu J."/>
            <person name="Yang H."/>
        </authorList>
    </citation>
    <scope>NUCLEOTIDE SEQUENCE [LARGE SCALE GENOMIC DNA]</scope>
    <source>
        <strain>DSM 15242 / JCM 11007 / NBRC 100824 / MB4</strain>
    </source>
</reference>
<organism>
    <name type="scientific">Caldanaerobacter subterraneus subsp. tengcongensis (strain DSM 15242 / JCM 11007 / NBRC 100824 / MB4)</name>
    <name type="common">Thermoanaerobacter tengcongensis</name>
    <dbReference type="NCBI Taxonomy" id="273068"/>
    <lineage>
        <taxon>Bacteria</taxon>
        <taxon>Bacillati</taxon>
        <taxon>Bacillota</taxon>
        <taxon>Clostridia</taxon>
        <taxon>Thermoanaerobacterales</taxon>
        <taxon>Thermoanaerobacteraceae</taxon>
        <taxon>Caldanaerobacter</taxon>
    </lineage>
</organism>
<sequence length="331" mass="36896">MAKMYYDQDADAEVLKGKKIAVIGFGSQGHAHALNLRDSGFDVVVGLYEGSKSKERAEKEGLTVLTVEEAAKVADVIMMLIPDEKQAKVYKESIEKNLTEGKALAFAHGFNIHFKQIVPPENVDVFMVAPKGPGHLVRRMYQEGKGVPCLVAVHQNYTGKALDIALAYAKGIGGTKAGAIETTFKEETETDLFGEQAVLCGGLTELMKAGFETLVEAGYQPEIAYFECVNEMKLIVDLIYEGGFSYMRYSISDTAEFGDYMTGKRIITEETRKEMKKILEEIQTGKFAKEWLLENQVGRPQYNAIKEREANHPIEKVGKSLREMMPWLSKK</sequence>
<name>ILVC_CALS4</name>
<feature type="chain" id="PRO_0000151375" description="Ketol-acid reductoisomerase (NADP(+))">
    <location>
        <begin position="1"/>
        <end position="331"/>
    </location>
</feature>
<feature type="domain" description="KARI N-terminal Rossmann" evidence="2">
    <location>
        <begin position="2"/>
        <end position="182"/>
    </location>
</feature>
<feature type="domain" description="KARI C-terminal knotted" evidence="3">
    <location>
        <begin position="183"/>
        <end position="328"/>
    </location>
</feature>
<feature type="active site" evidence="1">
    <location>
        <position position="108"/>
    </location>
</feature>
<feature type="binding site" evidence="1">
    <location>
        <begin position="25"/>
        <end position="28"/>
    </location>
    <ligand>
        <name>NADP(+)</name>
        <dbReference type="ChEBI" id="CHEBI:58349"/>
    </ligand>
</feature>
<feature type="binding site" evidence="1">
    <location>
        <position position="51"/>
    </location>
    <ligand>
        <name>NADP(+)</name>
        <dbReference type="ChEBI" id="CHEBI:58349"/>
    </ligand>
</feature>
<feature type="binding site" evidence="1">
    <location>
        <position position="53"/>
    </location>
    <ligand>
        <name>NADP(+)</name>
        <dbReference type="ChEBI" id="CHEBI:58349"/>
    </ligand>
</feature>
<feature type="binding site" evidence="1">
    <location>
        <begin position="83"/>
        <end position="86"/>
    </location>
    <ligand>
        <name>NADP(+)</name>
        <dbReference type="ChEBI" id="CHEBI:58349"/>
    </ligand>
</feature>
<feature type="binding site" evidence="1">
    <location>
        <position position="134"/>
    </location>
    <ligand>
        <name>NADP(+)</name>
        <dbReference type="ChEBI" id="CHEBI:58349"/>
    </ligand>
</feature>
<feature type="binding site" evidence="1">
    <location>
        <position position="191"/>
    </location>
    <ligand>
        <name>Mg(2+)</name>
        <dbReference type="ChEBI" id="CHEBI:18420"/>
        <label>1</label>
    </ligand>
</feature>
<feature type="binding site" evidence="1">
    <location>
        <position position="191"/>
    </location>
    <ligand>
        <name>Mg(2+)</name>
        <dbReference type="ChEBI" id="CHEBI:18420"/>
        <label>2</label>
    </ligand>
</feature>
<feature type="binding site" evidence="1">
    <location>
        <position position="195"/>
    </location>
    <ligand>
        <name>Mg(2+)</name>
        <dbReference type="ChEBI" id="CHEBI:18420"/>
        <label>1</label>
    </ligand>
</feature>
<feature type="binding site" evidence="1">
    <location>
        <position position="227"/>
    </location>
    <ligand>
        <name>Mg(2+)</name>
        <dbReference type="ChEBI" id="CHEBI:18420"/>
        <label>2</label>
    </ligand>
</feature>
<feature type="binding site" evidence="1">
    <location>
        <position position="231"/>
    </location>
    <ligand>
        <name>Mg(2+)</name>
        <dbReference type="ChEBI" id="CHEBI:18420"/>
        <label>2</label>
    </ligand>
</feature>
<feature type="binding site" evidence="1">
    <location>
        <position position="252"/>
    </location>
    <ligand>
        <name>substrate</name>
    </ligand>
</feature>
<comment type="function">
    <text evidence="1">Involved in the biosynthesis of branched-chain amino acids (BCAA). Catalyzes an alkyl-migration followed by a ketol-acid reduction of (S)-2-acetolactate (S2AL) to yield (R)-2,3-dihydroxy-isovalerate. In the isomerase reaction, S2AL is rearranged via a Mg-dependent methyl migration to produce 3-hydroxy-3-methyl-2-ketobutyrate (HMKB). In the reductase reaction, this 2-ketoacid undergoes a metal-dependent reduction by NADPH to yield (R)-2,3-dihydroxy-isovalerate.</text>
</comment>
<comment type="catalytic activity">
    <reaction evidence="1">
        <text>(2R)-2,3-dihydroxy-3-methylbutanoate + NADP(+) = (2S)-2-acetolactate + NADPH + H(+)</text>
        <dbReference type="Rhea" id="RHEA:22068"/>
        <dbReference type="ChEBI" id="CHEBI:15378"/>
        <dbReference type="ChEBI" id="CHEBI:49072"/>
        <dbReference type="ChEBI" id="CHEBI:57783"/>
        <dbReference type="ChEBI" id="CHEBI:58349"/>
        <dbReference type="ChEBI" id="CHEBI:58476"/>
        <dbReference type="EC" id="1.1.1.86"/>
    </reaction>
</comment>
<comment type="catalytic activity">
    <reaction evidence="1">
        <text>(2R,3R)-2,3-dihydroxy-3-methylpentanoate + NADP(+) = (S)-2-ethyl-2-hydroxy-3-oxobutanoate + NADPH + H(+)</text>
        <dbReference type="Rhea" id="RHEA:13493"/>
        <dbReference type="ChEBI" id="CHEBI:15378"/>
        <dbReference type="ChEBI" id="CHEBI:49256"/>
        <dbReference type="ChEBI" id="CHEBI:49258"/>
        <dbReference type="ChEBI" id="CHEBI:57783"/>
        <dbReference type="ChEBI" id="CHEBI:58349"/>
        <dbReference type="EC" id="1.1.1.86"/>
    </reaction>
</comment>
<comment type="cofactor">
    <cofactor evidence="1">
        <name>Mg(2+)</name>
        <dbReference type="ChEBI" id="CHEBI:18420"/>
    </cofactor>
    <text evidence="1">Binds 2 magnesium ions per subunit.</text>
</comment>
<comment type="pathway">
    <text evidence="1">Amino-acid biosynthesis; L-isoleucine biosynthesis; L-isoleucine from 2-oxobutanoate: step 2/4.</text>
</comment>
<comment type="pathway">
    <text evidence="1">Amino-acid biosynthesis; L-valine biosynthesis; L-valine from pyruvate: step 2/4.</text>
</comment>
<comment type="similarity">
    <text evidence="1">Belongs to the ketol-acid reductoisomerase family.</text>
</comment>
<evidence type="ECO:0000255" key="1">
    <source>
        <dbReference type="HAMAP-Rule" id="MF_00435"/>
    </source>
</evidence>
<evidence type="ECO:0000255" key="2">
    <source>
        <dbReference type="PROSITE-ProRule" id="PRU01197"/>
    </source>
</evidence>
<evidence type="ECO:0000255" key="3">
    <source>
        <dbReference type="PROSITE-ProRule" id="PRU01198"/>
    </source>
</evidence>
<accession>Q8RDK4</accession>